<name>NR4A1_BOVIN</name>
<proteinExistence type="evidence at transcript level"/>
<organism>
    <name type="scientific">Bos taurus</name>
    <name type="common">Bovine</name>
    <dbReference type="NCBI Taxonomy" id="9913"/>
    <lineage>
        <taxon>Eukaryota</taxon>
        <taxon>Metazoa</taxon>
        <taxon>Chordata</taxon>
        <taxon>Craniata</taxon>
        <taxon>Vertebrata</taxon>
        <taxon>Euteleostomi</taxon>
        <taxon>Mammalia</taxon>
        <taxon>Eutheria</taxon>
        <taxon>Laurasiatheria</taxon>
        <taxon>Artiodactyla</taxon>
        <taxon>Ruminantia</taxon>
        <taxon>Pecora</taxon>
        <taxon>Bovidae</taxon>
        <taxon>Bovinae</taxon>
        <taxon>Bos</taxon>
    </lineage>
</organism>
<gene>
    <name type="primary">NR4A1</name>
</gene>
<dbReference type="EMBL" id="BT026269">
    <property type="protein sequence ID" value="ABG67108.1"/>
    <property type="molecule type" value="mRNA"/>
</dbReference>
<dbReference type="RefSeq" id="NP_001069379.1">
    <property type="nucleotide sequence ID" value="NM_001075911.1"/>
</dbReference>
<dbReference type="RefSeq" id="XP_005206276.1">
    <property type="nucleotide sequence ID" value="XM_005206219.4"/>
</dbReference>
<dbReference type="RefSeq" id="XP_005206277.1">
    <property type="nucleotide sequence ID" value="XM_005206220.5"/>
</dbReference>
<dbReference type="RefSeq" id="XP_005206278.1">
    <property type="nucleotide sequence ID" value="XM_005206221.2"/>
</dbReference>
<dbReference type="RefSeq" id="XP_010803210.1">
    <property type="nucleotide sequence ID" value="XM_010804908.4"/>
</dbReference>
<dbReference type="SMR" id="Q0V8F0"/>
<dbReference type="FunCoup" id="Q0V8F0">
    <property type="interactions" value="364"/>
</dbReference>
<dbReference type="STRING" id="9913.ENSBTAP00000057165"/>
<dbReference type="PaxDb" id="9913-ENSBTAP00000000648"/>
<dbReference type="Ensembl" id="ENSBTAT00000000648.5">
    <property type="protein sequence ID" value="ENSBTAP00000000648.4"/>
    <property type="gene ID" value="ENSBTAG00000000507.7"/>
</dbReference>
<dbReference type="GeneID" id="528390"/>
<dbReference type="KEGG" id="bta:528390"/>
<dbReference type="CTD" id="3164"/>
<dbReference type="VEuPathDB" id="HostDB:ENSBTAG00000000507"/>
<dbReference type="VGNC" id="VGNC:32245">
    <property type="gene designation" value="NR4A1"/>
</dbReference>
<dbReference type="eggNOG" id="KOG4217">
    <property type="taxonomic scope" value="Eukaryota"/>
</dbReference>
<dbReference type="GeneTree" id="ENSGT00950000183038"/>
<dbReference type="HOGENOM" id="CLU_007368_14_2_1"/>
<dbReference type="InParanoid" id="Q0V8F0"/>
<dbReference type="OMA" id="YSCQFTA"/>
<dbReference type="OrthoDB" id="5952118at2759"/>
<dbReference type="TreeFam" id="TF315430"/>
<dbReference type="Reactome" id="R-BTA-383280">
    <property type="pathway name" value="Nuclear Receptor transcription pathway"/>
</dbReference>
<dbReference type="Proteomes" id="UP000009136">
    <property type="component" value="Chromosome 5"/>
</dbReference>
<dbReference type="Bgee" id="ENSBTAG00000000507">
    <property type="expression patterns" value="Expressed in adenohypophysis and 104 other cell types or tissues"/>
</dbReference>
<dbReference type="GO" id="GO:0000785">
    <property type="term" value="C:chromatin"/>
    <property type="evidence" value="ECO:0000250"/>
    <property type="project" value="UniProtKB"/>
</dbReference>
<dbReference type="GO" id="GO:0005829">
    <property type="term" value="C:cytosol"/>
    <property type="evidence" value="ECO:0000250"/>
    <property type="project" value="UniProtKB"/>
</dbReference>
<dbReference type="GO" id="GO:0005739">
    <property type="term" value="C:mitochondrion"/>
    <property type="evidence" value="ECO:0000250"/>
    <property type="project" value="UniProtKB"/>
</dbReference>
<dbReference type="GO" id="GO:0005634">
    <property type="term" value="C:nucleus"/>
    <property type="evidence" value="ECO:0000250"/>
    <property type="project" value="UniProtKB"/>
</dbReference>
<dbReference type="GO" id="GO:0005667">
    <property type="term" value="C:transcription regulator complex"/>
    <property type="evidence" value="ECO:0000318"/>
    <property type="project" value="GO_Central"/>
</dbReference>
<dbReference type="GO" id="GO:0001228">
    <property type="term" value="F:DNA-binding transcription activator activity, RNA polymerase II-specific"/>
    <property type="evidence" value="ECO:0000250"/>
    <property type="project" value="UniProtKB"/>
</dbReference>
<dbReference type="GO" id="GO:0000981">
    <property type="term" value="F:DNA-binding transcription factor activity, RNA polymerase II-specific"/>
    <property type="evidence" value="ECO:0000250"/>
    <property type="project" value="UniProtKB"/>
</dbReference>
<dbReference type="GO" id="GO:0003690">
    <property type="term" value="F:double-stranded DNA binding"/>
    <property type="evidence" value="ECO:0000250"/>
    <property type="project" value="UniProtKB"/>
</dbReference>
<dbReference type="GO" id="GO:0001530">
    <property type="term" value="F:lipopolysaccharide binding"/>
    <property type="evidence" value="ECO:0000250"/>
    <property type="project" value="UniProtKB"/>
</dbReference>
<dbReference type="GO" id="GO:0035259">
    <property type="term" value="F:nuclear glucocorticoid receptor binding"/>
    <property type="evidence" value="ECO:0000318"/>
    <property type="project" value="GO_Central"/>
</dbReference>
<dbReference type="GO" id="GO:0004879">
    <property type="term" value="F:nuclear receptor activity"/>
    <property type="evidence" value="ECO:0007669"/>
    <property type="project" value="InterPro"/>
</dbReference>
<dbReference type="GO" id="GO:0046982">
    <property type="term" value="F:protein heterodimerization activity"/>
    <property type="evidence" value="ECO:0000250"/>
    <property type="project" value="UniProtKB"/>
</dbReference>
<dbReference type="GO" id="GO:0000978">
    <property type="term" value="F:RNA polymerase II cis-regulatory region sequence-specific DNA binding"/>
    <property type="evidence" value="ECO:0000318"/>
    <property type="project" value="GO_Central"/>
</dbReference>
<dbReference type="GO" id="GO:0008270">
    <property type="term" value="F:zinc ion binding"/>
    <property type="evidence" value="ECO:0007669"/>
    <property type="project" value="UniProtKB-KW"/>
</dbReference>
<dbReference type="GO" id="GO:0071376">
    <property type="term" value="P:cellular response to corticotropin-releasing hormone stimulus"/>
    <property type="evidence" value="ECO:0000250"/>
    <property type="project" value="UniProtKB"/>
</dbReference>
<dbReference type="GO" id="GO:0032497">
    <property type="term" value="P:detection of lipopolysaccharide"/>
    <property type="evidence" value="ECO:0000250"/>
    <property type="project" value="UniProtKB"/>
</dbReference>
<dbReference type="GO" id="GO:0045444">
    <property type="term" value="P:fat cell differentiation"/>
    <property type="evidence" value="ECO:0000250"/>
    <property type="project" value="UniProtKB"/>
</dbReference>
<dbReference type="GO" id="GO:0006954">
    <property type="term" value="P:inflammatory response"/>
    <property type="evidence" value="ECO:0007669"/>
    <property type="project" value="UniProtKB-KW"/>
</dbReference>
<dbReference type="GO" id="GO:0045786">
    <property type="term" value="P:negative regulation of cell cycle"/>
    <property type="evidence" value="ECO:0000250"/>
    <property type="project" value="UniProtKB"/>
</dbReference>
<dbReference type="GO" id="GO:0160075">
    <property type="term" value="P:non-canonical inflammasome complex assembly"/>
    <property type="evidence" value="ECO:0000250"/>
    <property type="project" value="UniProtKB"/>
</dbReference>
<dbReference type="GO" id="GO:0045944">
    <property type="term" value="P:positive regulation of transcription by RNA polymerase II"/>
    <property type="evidence" value="ECO:0000250"/>
    <property type="project" value="UniProtKB"/>
</dbReference>
<dbReference type="GO" id="GO:0006357">
    <property type="term" value="P:regulation of transcription by RNA polymerase II"/>
    <property type="evidence" value="ECO:0000318"/>
    <property type="project" value="GO_Central"/>
</dbReference>
<dbReference type="GO" id="GO:0061469">
    <property type="term" value="P:regulation of type B pancreatic cell proliferation"/>
    <property type="evidence" value="ECO:0000250"/>
    <property type="project" value="UniProtKB"/>
</dbReference>
<dbReference type="CDD" id="cd06969">
    <property type="entry name" value="NR_DBD_NGFI-B"/>
    <property type="match status" value="1"/>
</dbReference>
<dbReference type="CDD" id="cd07348">
    <property type="entry name" value="NR_LBD_NGFI-B"/>
    <property type="match status" value="1"/>
</dbReference>
<dbReference type="FunFam" id="1.10.565.10:FF:000008">
    <property type="entry name" value="Nuclear receptor subfamily 4 group A member 1"/>
    <property type="match status" value="1"/>
</dbReference>
<dbReference type="FunFam" id="3.30.50.10:FF:000009">
    <property type="entry name" value="nuclear receptor subfamily 4 group A member 2"/>
    <property type="match status" value="1"/>
</dbReference>
<dbReference type="Gene3D" id="3.30.50.10">
    <property type="entry name" value="Erythroid Transcription Factor GATA-1, subunit A"/>
    <property type="match status" value="1"/>
</dbReference>
<dbReference type="Gene3D" id="1.10.565.10">
    <property type="entry name" value="Retinoid X Receptor"/>
    <property type="match status" value="1"/>
</dbReference>
<dbReference type="InterPro" id="IPR035500">
    <property type="entry name" value="NHR-like_dom_sf"/>
</dbReference>
<dbReference type="InterPro" id="IPR003071">
    <property type="entry name" value="NR4A1"/>
</dbReference>
<dbReference type="InterPro" id="IPR003070">
    <property type="entry name" value="NR4A1-3"/>
</dbReference>
<dbReference type="InterPro" id="IPR000536">
    <property type="entry name" value="Nucl_hrmn_rcpt_lig-bd"/>
</dbReference>
<dbReference type="InterPro" id="IPR001723">
    <property type="entry name" value="Nuclear_hrmn_rcpt"/>
</dbReference>
<dbReference type="InterPro" id="IPR001628">
    <property type="entry name" value="Znf_hrmn_rcpt"/>
</dbReference>
<dbReference type="InterPro" id="IPR013088">
    <property type="entry name" value="Znf_NHR/GATA"/>
</dbReference>
<dbReference type="PANTHER" id="PTHR24085">
    <property type="entry name" value="NUCLEAR HORMONE RECEPTOR"/>
    <property type="match status" value="1"/>
</dbReference>
<dbReference type="PANTHER" id="PTHR24085:SF1">
    <property type="entry name" value="NUCLEAR RECEPTOR SUBFAMILY 4 GROUP A MEMBER 1"/>
    <property type="match status" value="1"/>
</dbReference>
<dbReference type="Pfam" id="PF00104">
    <property type="entry name" value="Hormone_recep"/>
    <property type="match status" value="1"/>
</dbReference>
<dbReference type="Pfam" id="PF00105">
    <property type="entry name" value="zf-C4"/>
    <property type="match status" value="1"/>
</dbReference>
<dbReference type="PRINTS" id="PR01285">
    <property type="entry name" value="HMRNUCRECPTR"/>
</dbReference>
<dbReference type="PRINTS" id="PR01284">
    <property type="entry name" value="NUCLEARECPTR"/>
</dbReference>
<dbReference type="PRINTS" id="PR00398">
    <property type="entry name" value="STRDHORMONER"/>
</dbReference>
<dbReference type="PRINTS" id="PR00047">
    <property type="entry name" value="STROIDFINGER"/>
</dbReference>
<dbReference type="SMART" id="SM00430">
    <property type="entry name" value="HOLI"/>
    <property type="match status" value="1"/>
</dbReference>
<dbReference type="SMART" id="SM00399">
    <property type="entry name" value="ZnF_C4"/>
    <property type="match status" value="1"/>
</dbReference>
<dbReference type="SUPFAM" id="SSF57716">
    <property type="entry name" value="Glucocorticoid receptor-like (DNA-binding domain)"/>
    <property type="match status" value="1"/>
</dbReference>
<dbReference type="SUPFAM" id="SSF48508">
    <property type="entry name" value="Nuclear receptor ligand-binding domain"/>
    <property type="match status" value="1"/>
</dbReference>
<dbReference type="PROSITE" id="PS51843">
    <property type="entry name" value="NR_LBD"/>
    <property type="match status" value="1"/>
</dbReference>
<dbReference type="PROSITE" id="PS00031">
    <property type="entry name" value="NUCLEAR_REC_DBD_1"/>
    <property type="match status" value="1"/>
</dbReference>
<dbReference type="PROSITE" id="PS51030">
    <property type="entry name" value="NUCLEAR_REC_DBD_2"/>
    <property type="match status" value="1"/>
</dbReference>
<accession>Q0V8F0</accession>
<reference key="1">
    <citation type="journal article" date="2005" name="BMC Genomics">
        <title>Characterization of 954 bovine full-CDS cDNA sequences.</title>
        <authorList>
            <person name="Harhay G.P."/>
            <person name="Sonstegard T.S."/>
            <person name="Keele J.W."/>
            <person name="Heaton M.P."/>
            <person name="Clawson M.L."/>
            <person name="Snelling W.M."/>
            <person name="Wiedmann R.T."/>
            <person name="Van Tassell C.P."/>
            <person name="Smith T.P.L."/>
        </authorList>
    </citation>
    <scope>NUCLEOTIDE SEQUENCE [LARGE SCALE MRNA]</scope>
</reference>
<keyword id="KW-0007">Acetylation</keyword>
<keyword id="KW-0963">Cytoplasm</keyword>
<keyword id="KW-0238">DNA-binding</keyword>
<keyword id="KW-0395">Inflammatory response</keyword>
<keyword id="KW-0479">Metal-binding</keyword>
<keyword id="KW-0496">Mitochondrion</keyword>
<keyword id="KW-0539">Nucleus</keyword>
<keyword id="KW-0597">Phosphoprotein</keyword>
<keyword id="KW-0675">Receptor</keyword>
<keyword id="KW-1185">Reference proteome</keyword>
<keyword id="KW-0804">Transcription</keyword>
<keyword id="KW-0805">Transcription regulation</keyword>
<keyword id="KW-0862">Zinc</keyword>
<keyword id="KW-0863">Zinc-finger</keyword>
<sequence>MPCIQAQYGTPAPSPGPRDHLAGDLLTPELSKPTMDLASPEAAPAVPTALPSFSTFMDGYTGEFDTFLYQLSGTAQPCSSASSSASSTSSSSATSPASASFKFEDFQVYGCYPGTLSGPLDETLSSSGSDYYGSPCSAPSPSTPSFQPPQLSPWDGSFGPFSPSQTYEGLRAWTEQLPKASGPPQPPAFFSFSPPPGPSPSLAPSPLKLFPSQAAHQLGEGESYSMQTAFPGLVPTSPHLDGSGRLDAPVTSAKARSGAPGGSEGRCAVCGDNASCQHYGVRTCEGCKGFFKRTVQKNAKYICLANKDCPVDKRRRNRCQFCRFQKCLAVGMVKEVVRTDSLKGRRGRLPSKPKQPPETSPAHLLTSLVRAHLDSGPSTSKLDYSKFQELALPHFGKEDAGDVQQFYDLLSGSLEVIRKWAEKIPGFAELSPGDQDLLLESAFLELFILRLAYRSKPAEGKLIFCSGLVLHRLQCARGFGDWIDSILAFSRSLHSLVVDIPAFACLSALVLITDRHGLQEPRRVEELQNRIASCLKEHVSAEAGEPQPASCLSRLLGKLPELRTLCTQGLQRIFYLKLEDLVPPPPIVDKIFMDTLPF</sequence>
<comment type="function">
    <text evidence="2 3 4">Orphan nuclear receptor. Binds the NGFI-B response element (NBRE) 5'-AAAGGTCA-3' (By similarity). Binds 9-cis-retinoic acid outside of its ligand-binding (NR LBD) domain (By similarity). Participates in energy homeostasis by sequestrating the kinase STK11 in the nucleus, thereby attenuating cytoplasmic AMPK activation (By similarity). Regulates the inflammatory response in macrophages by regulating metabolic adaptations during inflammation, including repressing the transcription of genes involved in the citric acid cycle (TCA) (By similarity). Inhibits NF-kappa-B signaling by binding to low-affinity NF-kappa-B binding sites, such as at the IL2 promoter (By similarity). May act concomitantly with NR4A2 in regulating the expression of delayed-early genes during liver regeneration (By similarity). Plays a role in the vascular response to injury (By similarity).</text>
</comment>
<comment type="function">
    <text evidence="2">In the cytosol, upon its detection of both bacterial lipopolysaccharide (LPS) and NBRE-containing mitochondrial DNA released by GSDMD pores during pyroptosis, it promotes non-canonical NLRP3 inflammasome activation by stimulating association of NLRP3 and NEK7.</text>
</comment>
<comment type="cofactor">
    <cofactor evidence="4">
        <name>Zn(2+)</name>
        <dbReference type="ChEBI" id="CHEBI:29105"/>
    </cofactor>
    <text evidence="4">Binds 2 zinc ions.</text>
</comment>
<comment type="subunit">
    <text evidence="2 3 4">Binds the NGFI-B response element (NBRE) as a monomer (By similarity). Binds the Nur response element (NurRE), consisting of two inverse NBRE-related octanucleotide repeats separated by 6 base-pairs, as a dimer (By similarity). Interacts (via N-terminus) with NLRP3 (via LRR repeat domain); the interaction is direct, requires binding of NR4A1/Nur77 to NBRE-containing dsDNA and lipopolysaccharide, and leads to non-canonical NLRP3 inflammasome activation (By similarity). Interacts with GADD45GIP1 (By similarity). Interacts with STK11 (By similarity). Interacts with IFI27 (By similarity). Heterodimer (via DNA-binding domain) with RXRA (via C-terminus); DNA-binding of the heterodimer is enhanced by 9-cis retinoic acid (By similarity). Competes for the RXRA interaction with EP300 and thereby attenuates EP300 mediated acetylation of RXRA (By similarity). Interacts with NCOA1 (By similarity). Interacts with NCOA2 (By similarity). Interacts with NCOA3 (By similarity).</text>
</comment>
<comment type="subcellular location">
    <subcellularLocation>
        <location evidence="3">Nucleus</location>
    </subcellularLocation>
    <subcellularLocation>
        <location evidence="3">Cytoplasm</location>
        <location evidence="3">Cytosol</location>
    </subcellularLocation>
    <subcellularLocation>
        <location evidence="3">Mitochondrion</location>
    </subcellularLocation>
    <text evidence="3">Nuclear export to the cytosol is XPO1-mediated and positively regulated by IFI27. Translocation to the mitochondrion upon interaction with RXRA and upon the presence of 9-cis retinoic acid (By similarity).</text>
</comment>
<comment type="domain">
    <text evidence="2">The NR LBD domain binds the lipid A moiety of lipopolysaccharide (LPS) in the cytosol.</text>
</comment>
<comment type="PTM">
    <text evidence="1">Phosphorylated at Ser-351 by RPS6KA1 and RPS6KA3 in response to mitogenic or stress stimuli.</text>
</comment>
<comment type="PTM">
    <text evidence="1">Acetylated by p300/CBP, acetylation increases stability. Deacetylated by HDAC1 (By similarity).</text>
</comment>
<comment type="similarity">
    <text evidence="8">Belongs to the nuclear hormone receptor family. NR4 subfamily.</text>
</comment>
<feature type="chain" id="PRO_0000274208" description="Nuclear receptor subfamily 4 group A member 1">
    <location>
        <begin position="1"/>
        <end position="598"/>
    </location>
</feature>
<feature type="domain" description="NR LBD" evidence="6">
    <location>
        <begin position="360"/>
        <end position="595"/>
    </location>
</feature>
<feature type="DNA-binding region" description="Nuclear receptor" evidence="5">
    <location>
        <begin position="264"/>
        <end position="339"/>
    </location>
</feature>
<feature type="zinc finger region" description="NR C4-type" evidence="5">
    <location>
        <begin position="267"/>
        <end position="287"/>
    </location>
</feature>
<feature type="zinc finger region" description="NR C4-type" evidence="5">
    <location>
        <begin position="303"/>
        <end position="327"/>
    </location>
</feature>
<feature type="region of interest" description="Disordered" evidence="7">
    <location>
        <begin position="1"/>
        <end position="43"/>
    </location>
</feature>
<feature type="region of interest" description="Disordered" evidence="7">
    <location>
        <begin position="128"/>
        <end position="151"/>
    </location>
</feature>
<feature type="region of interest" description="Required for nuclear import" evidence="3">
    <location>
        <begin position="171"/>
        <end position="466"/>
    </location>
</feature>
<feature type="region of interest" description="Required for binding NBRE-containing DNA" evidence="2">
    <location>
        <begin position="268"/>
        <end position="354"/>
    </location>
</feature>
<feature type="region of interest" description="Required for the interaction with RXRA" evidence="3">
    <location>
        <begin position="299"/>
        <end position="361"/>
    </location>
</feature>
<feature type="region of interest" description="Disordered" evidence="7">
    <location>
        <begin position="341"/>
        <end position="361"/>
    </location>
</feature>
<feature type="region of interest" description="Binds lipopolysaccharide" evidence="2">
    <location>
        <begin position="521"/>
        <end position="544"/>
    </location>
</feature>
<feature type="region of interest" description="AF-2" evidence="6">
    <location>
        <begin position="584"/>
        <end position="595"/>
    </location>
</feature>
<feature type="compositionally biased region" description="Low complexity" evidence="7">
    <location>
        <begin position="134"/>
        <end position="145"/>
    </location>
</feature>
<feature type="modified residue" description="Phosphoserine; by PKA" evidence="4">
    <location>
        <position position="341"/>
    </location>
</feature>
<feature type="modified residue" description="Phosphoserine; by PKA, RPS6KA1 and RPS6KA3" evidence="4">
    <location>
        <position position="351"/>
    </location>
</feature>
<protein>
    <recommendedName>
        <fullName>Nuclear receptor subfamily 4 group A member 1</fullName>
    </recommendedName>
</protein>
<evidence type="ECO:0000250" key="1"/>
<evidence type="ECO:0000250" key="2">
    <source>
        <dbReference type="UniProtKB" id="P12813"/>
    </source>
</evidence>
<evidence type="ECO:0000250" key="3">
    <source>
        <dbReference type="UniProtKB" id="P22736"/>
    </source>
</evidence>
<evidence type="ECO:0000250" key="4">
    <source>
        <dbReference type="UniProtKB" id="P22829"/>
    </source>
</evidence>
<evidence type="ECO:0000255" key="5">
    <source>
        <dbReference type="PROSITE-ProRule" id="PRU00407"/>
    </source>
</evidence>
<evidence type="ECO:0000255" key="6">
    <source>
        <dbReference type="PROSITE-ProRule" id="PRU01189"/>
    </source>
</evidence>
<evidence type="ECO:0000256" key="7">
    <source>
        <dbReference type="SAM" id="MobiDB-lite"/>
    </source>
</evidence>
<evidence type="ECO:0000305" key="8"/>